<dbReference type="EMBL" id="CP000738">
    <property type="protein sequence ID" value="ABR59982.1"/>
    <property type="molecule type" value="Genomic_DNA"/>
</dbReference>
<dbReference type="RefSeq" id="WP_011975301.1">
    <property type="nucleotide sequence ID" value="NC_009636.1"/>
</dbReference>
<dbReference type="RefSeq" id="YP_001326817.1">
    <property type="nucleotide sequence ID" value="NC_009636.1"/>
</dbReference>
<dbReference type="SMR" id="A6U8K2"/>
<dbReference type="STRING" id="366394.Smed_1131"/>
<dbReference type="GeneID" id="61612089"/>
<dbReference type="KEGG" id="smd:Smed_1131"/>
<dbReference type="PATRIC" id="fig|366394.8.peg.4256"/>
<dbReference type="eggNOG" id="COG0052">
    <property type="taxonomic scope" value="Bacteria"/>
</dbReference>
<dbReference type="HOGENOM" id="CLU_040318_2_3_5"/>
<dbReference type="OrthoDB" id="9808036at2"/>
<dbReference type="Proteomes" id="UP000001108">
    <property type="component" value="Chromosome"/>
</dbReference>
<dbReference type="GO" id="GO:0022627">
    <property type="term" value="C:cytosolic small ribosomal subunit"/>
    <property type="evidence" value="ECO:0007669"/>
    <property type="project" value="TreeGrafter"/>
</dbReference>
<dbReference type="GO" id="GO:0003735">
    <property type="term" value="F:structural constituent of ribosome"/>
    <property type="evidence" value="ECO:0007669"/>
    <property type="project" value="InterPro"/>
</dbReference>
<dbReference type="GO" id="GO:0006412">
    <property type="term" value="P:translation"/>
    <property type="evidence" value="ECO:0007669"/>
    <property type="project" value="UniProtKB-UniRule"/>
</dbReference>
<dbReference type="CDD" id="cd01425">
    <property type="entry name" value="RPS2"/>
    <property type="match status" value="1"/>
</dbReference>
<dbReference type="Gene3D" id="3.40.50.10490">
    <property type="entry name" value="Glucose-6-phosphate isomerase like protein, domain 1"/>
    <property type="match status" value="1"/>
</dbReference>
<dbReference type="Gene3D" id="1.10.287.610">
    <property type="entry name" value="Helix hairpin bin"/>
    <property type="match status" value="1"/>
</dbReference>
<dbReference type="HAMAP" id="MF_00291_B">
    <property type="entry name" value="Ribosomal_uS2_B"/>
    <property type="match status" value="1"/>
</dbReference>
<dbReference type="InterPro" id="IPR001865">
    <property type="entry name" value="Ribosomal_uS2"/>
</dbReference>
<dbReference type="InterPro" id="IPR005706">
    <property type="entry name" value="Ribosomal_uS2_bac/mit/plastid"/>
</dbReference>
<dbReference type="InterPro" id="IPR018130">
    <property type="entry name" value="Ribosomal_uS2_CS"/>
</dbReference>
<dbReference type="InterPro" id="IPR023591">
    <property type="entry name" value="Ribosomal_uS2_flav_dom_sf"/>
</dbReference>
<dbReference type="NCBIfam" id="TIGR01011">
    <property type="entry name" value="rpsB_bact"/>
    <property type="match status" value="1"/>
</dbReference>
<dbReference type="PANTHER" id="PTHR12534">
    <property type="entry name" value="30S RIBOSOMAL PROTEIN S2 PROKARYOTIC AND ORGANELLAR"/>
    <property type="match status" value="1"/>
</dbReference>
<dbReference type="PANTHER" id="PTHR12534:SF0">
    <property type="entry name" value="SMALL RIBOSOMAL SUBUNIT PROTEIN US2M"/>
    <property type="match status" value="1"/>
</dbReference>
<dbReference type="Pfam" id="PF00318">
    <property type="entry name" value="Ribosomal_S2"/>
    <property type="match status" value="1"/>
</dbReference>
<dbReference type="PRINTS" id="PR00395">
    <property type="entry name" value="RIBOSOMALS2"/>
</dbReference>
<dbReference type="SUPFAM" id="SSF52313">
    <property type="entry name" value="Ribosomal protein S2"/>
    <property type="match status" value="1"/>
</dbReference>
<dbReference type="PROSITE" id="PS00962">
    <property type="entry name" value="RIBOSOMAL_S2_1"/>
    <property type="match status" value="1"/>
</dbReference>
<dbReference type="PROSITE" id="PS00963">
    <property type="entry name" value="RIBOSOMAL_S2_2"/>
    <property type="match status" value="1"/>
</dbReference>
<reference key="1">
    <citation type="submission" date="2007-06" db="EMBL/GenBank/DDBJ databases">
        <title>Complete sequence of Sinorhizobium medicae WSM419 chromosome.</title>
        <authorList>
            <consortium name="US DOE Joint Genome Institute"/>
            <person name="Copeland A."/>
            <person name="Lucas S."/>
            <person name="Lapidus A."/>
            <person name="Barry K."/>
            <person name="Glavina del Rio T."/>
            <person name="Dalin E."/>
            <person name="Tice H."/>
            <person name="Pitluck S."/>
            <person name="Chain P."/>
            <person name="Malfatti S."/>
            <person name="Shin M."/>
            <person name="Vergez L."/>
            <person name="Schmutz J."/>
            <person name="Larimer F."/>
            <person name="Land M."/>
            <person name="Hauser L."/>
            <person name="Kyrpides N."/>
            <person name="Mikhailova N."/>
            <person name="Reeve W.G."/>
            <person name="Richardson P."/>
        </authorList>
    </citation>
    <scope>NUCLEOTIDE SEQUENCE [LARGE SCALE GENOMIC DNA]</scope>
    <source>
        <strain>WSM419</strain>
    </source>
</reference>
<name>RS2_SINMW</name>
<keyword id="KW-0687">Ribonucleoprotein</keyword>
<keyword id="KW-0689">Ribosomal protein</keyword>
<evidence type="ECO:0000255" key="1">
    <source>
        <dbReference type="HAMAP-Rule" id="MF_00291"/>
    </source>
</evidence>
<evidence type="ECO:0000256" key="2">
    <source>
        <dbReference type="SAM" id="MobiDB-lite"/>
    </source>
</evidence>
<evidence type="ECO:0000305" key="3"/>
<organism>
    <name type="scientific">Sinorhizobium medicae (strain WSM419)</name>
    <name type="common">Ensifer medicae</name>
    <dbReference type="NCBI Taxonomy" id="366394"/>
    <lineage>
        <taxon>Bacteria</taxon>
        <taxon>Pseudomonadati</taxon>
        <taxon>Pseudomonadota</taxon>
        <taxon>Alphaproteobacteria</taxon>
        <taxon>Hyphomicrobiales</taxon>
        <taxon>Rhizobiaceae</taxon>
        <taxon>Sinorhizobium/Ensifer group</taxon>
        <taxon>Sinorhizobium</taxon>
    </lineage>
</organism>
<protein>
    <recommendedName>
        <fullName evidence="1">Small ribosomal subunit protein uS2</fullName>
    </recommendedName>
    <alternativeName>
        <fullName evidence="3">30S ribosomal protein S2</fullName>
    </alternativeName>
</protein>
<accession>A6U8K2</accession>
<feature type="chain" id="PRO_1000004075" description="Small ribosomal subunit protein uS2">
    <location>
        <begin position="1"/>
        <end position="255"/>
    </location>
</feature>
<feature type="region of interest" description="Disordered" evidence="2">
    <location>
        <begin position="232"/>
        <end position="255"/>
    </location>
</feature>
<sequence>MALPDFTMRQLLEAGVHFGHQTHRWNPKMKPYIFGDRNNVHIIDLAQTVPMLSRALQVVSDTVASGGRVLFVGTKRQASEIIADAAKRSAQYYVNARWLGGMMTNWKTISNSIQRLRKLDEILASEASGFTKKERLNLEREREKLNRALGGIRDMGGTPDLMFIIDTNKESIAIEEAKRLGIPVVAVIDSNCDPDQIDYPIPGNDDASRAVALYCDLIARAAIDGIARQQGASGRDLGASEEVPVEPALEEASEA</sequence>
<gene>
    <name evidence="1" type="primary">rpsB</name>
    <name type="ordered locus">Smed_1131</name>
</gene>
<proteinExistence type="inferred from homology"/>
<comment type="similarity">
    <text evidence="1">Belongs to the universal ribosomal protein uS2 family.</text>
</comment>